<proteinExistence type="inferred from homology"/>
<evidence type="ECO:0000250" key="1"/>
<evidence type="ECO:0000255" key="2">
    <source>
        <dbReference type="HAMAP-Rule" id="MF_00100"/>
    </source>
</evidence>
<evidence type="ECO:0000256" key="3">
    <source>
        <dbReference type="SAM" id="MobiDB-lite"/>
    </source>
</evidence>
<protein>
    <recommendedName>
        <fullName evidence="2">Translation initiation factor IF-2</fullName>
    </recommendedName>
</protein>
<keyword id="KW-0963">Cytoplasm</keyword>
<keyword id="KW-0342">GTP-binding</keyword>
<keyword id="KW-0396">Initiation factor</keyword>
<keyword id="KW-0547">Nucleotide-binding</keyword>
<keyword id="KW-0648">Protein biosynthesis</keyword>
<keyword id="KW-1185">Reference proteome</keyword>
<organism>
    <name type="scientific">Beutenbergia cavernae (strain ATCC BAA-8 / DSM 12333 / CCUG 43141 / JCM 11478 / NBRC 16432 / NCIMB 13614 / HKI 0122)</name>
    <dbReference type="NCBI Taxonomy" id="471853"/>
    <lineage>
        <taxon>Bacteria</taxon>
        <taxon>Bacillati</taxon>
        <taxon>Actinomycetota</taxon>
        <taxon>Actinomycetes</taxon>
        <taxon>Micrococcales</taxon>
        <taxon>Beutenbergiaceae</taxon>
        <taxon>Beutenbergia</taxon>
    </lineage>
</organism>
<name>IF2_BEUC1</name>
<accession>C5BWS3</accession>
<gene>
    <name evidence="2" type="primary">infB</name>
    <name type="ordered locus">Bcav_2489</name>
</gene>
<dbReference type="EMBL" id="CP001618">
    <property type="protein sequence ID" value="ACQ80739.1"/>
    <property type="molecule type" value="Genomic_DNA"/>
</dbReference>
<dbReference type="RefSeq" id="WP_015882979.1">
    <property type="nucleotide sequence ID" value="NC_012669.1"/>
</dbReference>
<dbReference type="SMR" id="C5BWS3"/>
<dbReference type="STRING" id="471853.Bcav_2489"/>
<dbReference type="KEGG" id="bcv:Bcav_2489"/>
<dbReference type="eggNOG" id="COG0532">
    <property type="taxonomic scope" value="Bacteria"/>
</dbReference>
<dbReference type="HOGENOM" id="CLU_006301_9_1_11"/>
<dbReference type="OrthoDB" id="9811804at2"/>
<dbReference type="Proteomes" id="UP000007962">
    <property type="component" value="Chromosome"/>
</dbReference>
<dbReference type="GO" id="GO:0005829">
    <property type="term" value="C:cytosol"/>
    <property type="evidence" value="ECO:0007669"/>
    <property type="project" value="TreeGrafter"/>
</dbReference>
<dbReference type="GO" id="GO:0005525">
    <property type="term" value="F:GTP binding"/>
    <property type="evidence" value="ECO:0007669"/>
    <property type="project" value="UniProtKB-KW"/>
</dbReference>
<dbReference type="GO" id="GO:0003924">
    <property type="term" value="F:GTPase activity"/>
    <property type="evidence" value="ECO:0007669"/>
    <property type="project" value="UniProtKB-UniRule"/>
</dbReference>
<dbReference type="GO" id="GO:0003743">
    <property type="term" value="F:translation initiation factor activity"/>
    <property type="evidence" value="ECO:0007669"/>
    <property type="project" value="UniProtKB-UniRule"/>
</dbReference>
<dbReference type="CDD" id="cd01887">
    <property type="entry name" value="IF2_eIF5B"/>
    <property type="match status" value="1"/>
</dbReference>
<dbReference type="CDD" id="cd03702">
    <property type="entry name" value="IF2_mtIF2_II"/>
    <property type="match status" value="1"/>
</dbReference>
<dbReference type="CDD" id="cd03692">
    <property type="entry name" value="mtIF2_IVc"/>
    <property type="match status" value="1"/>
</dbReference>
<dbReference type="FunFam" id="1.10.10.2480:FF:000003">
    <property type="entry name" value="Translation initiation factor IF-2"/>
    <property type="match status" value="1"/>
</dbReference>
<dbReference type="FunFam" id="2.40.30.10:FF:000007">
    <property type="entry name" value="Translation initiation factor IF-2"/>
    <property type="match status" value="1"/>
</dbReference>
<dbReference type="FunFam" id="2.40.30.10:FF:000008">
    <property type="entry name" value="Translation initiation factor IF-2"/>
    <property type="match status" value="1"/>
</dbReference>
<dbReference type="FunFam" id="3.40.50.10050:FF:000001">
    <property type="entry name" value="Translation initiation factor IF-2"/>
    <property type="match status" value="1"/>
</dbReference>
<dbReference type="FunFam" id="3.40.50.300:FF:000019">
    <property type="entry name" value="Translation initiation factor IF-2"/>
    <property type="match status" value="1"/>
</dbReference>
<dbReference type="Gene3D" id="1.10.10.2480">
    <property type="match status" value="1"/>
</dbReference>
<dbReference type="Gene3D" id="3.40.50.300">
    <property type="entry name" value="P-loop containing nucleotide triphosphate hydrolases"/>
    <property type="match status" value="1"/>
</dbReference>
<dbReference type="Gene3D" id="2.40.30.10">
    <property type="entry name" value="Translation factors"/>
    <property type="match status" value="2"/>
</dbReference>
<dbReference type="Gene3D" id="3.40.50.10050">
    <property type="entry name" value="Translation initiation factor IF- 2, domain 3"/>
    <property type="match status" value="1"/>
</dbReference>
<dbReference type="HAMAP" id="MF_00100_B">
    <property type="entry name" value="IF_2_B"/>
    <property type="match status" value="1"/>
</dbReference>
<dbReference type="InterPro" id="IPR053905">
    <property type="entry name" value="EF-G-like_DII"/>
</dbReference>
<dbReference type="InterPro" id="IPR044145">
    <property type="entry name" value="IF2_II"/>
</dbReference>
<dbReference type="InterPro" id="IPR006847">
    <property type="entry name" value="IF2_N"/>
</dbReference>
<dbReference type="InterPro" id="IPR027417">
    <property type="entry name" value="P-loop_NTPase"/>
</dbReference>
<dbReference type="InterPro" id="IPR005225">
    <property type="entry name" value="Small_GTP-bd"/>
</dbReference>
<dbReference type="InterPro" id="IPR000795">
    <property type="entry name" value="T_Tr_GTP-bd_dom"/>
</dbReference>
<dbReference type="InterPro" id="IPR000178">
    <property type="entry name" value="TF_IF2_bacterial-like"/>
</dbReference>
<dbReference type="InterPro" id="IPR015760">
    <property type="entry name" value="TIF_IF2"/>
</dbReference>
<dbReference type="InterPro" id="IPR023115">
    <property type="entry name" value="TIF_IF2_dom3"/>
</dbReference>
<dbReference type="InterPro" id="IPR036925">
    <property type="entry name" value="TIF_IF2_dom3_sf"/>
</dbReference>
<dbReference type="InterPro" id="IPR009000">
    <property type="entry name" value="Transl_B-barrel_sf"/>
</dbReference>
<dbReference type="NCBIfam" id="TIGR00487">
    <property type="entry name" value="IF-2"/>
    <property type="match status" value="1"/>
</dbReference>
<dbReference type="NCBIfam" id="TIGR00231">
    <property type="entry name" value="small_GTP"/>
    <property type="match status" value="1"/>
</dbReference>
<dbReference type="PANTHER" id="PTHR43381:SF5">
    <property type="entry name" value="TR-TYPE G DOMAIN-CONTAINING PROTEIN"/>
    <property type="match status" value="1"/>
</dbReference>
<dbReference type="PANTHER" id="PTHR43381">
    <property type="entry name" value="TRANSLATION INITIATION FACTOR IF-2-RELATED"/>
    <property type="match status" value="1"/>
</dbReference>
<dbReference type="Pfam" id="PF22042">
    <property type="entry name" value="EF-G_D2"/>
    <property type="match status" value="1"/>
</dbReference>
<dbReference type="Pfam" id="PF00009">
    <property type="entry name" value="GTP_EFTU"/>
    <property type="match status" value="1"/>
</dbReference>
<dbReference type="Pfam" id="PF11987">
    <property type="entry name" value="IF-2"/>
    <property type="match status" value="1"/>
</dbReference>
<dbReference type="Pfam" id="PF04760">
    <property type="entry name" value="IF2_N"/>
    <property type="match status" value="1"/>
</dbReference>
<dbReference type="PRINTS" id="PR00315">
    <property type="entry name" value="ELONGATNFCT"/>
</dbReference>
<dbReference type="SUPFAM" id="SSF52156">
    <property type="entry name" value="Initiation factor IF2/eIF5b, domain 3"/>
    <property type="match status" value="1"/>
</dbReference>
<dbReference type="SUPFAM" id="SSF52540">
    <property type="entry name" value="P-loop containing nucleoside triphosphate hydrolases"/>
    <property type="match status" value="1"/>
</dbReference>
<dbReference type="SUPFAM" id="SSF50447">
    <property type="entry name" value="Translation proteins"/>
    <property type="match status" value="2"/>
</dbReference>
<dbReference type="PROSITE" id="PS51722">
    <property type="entry name" value="G_TR_2"/>
    <property type="match status" value="1"/>
</dbReference>
<dbReference type="PROSITE" id="PS01176">
    <property type="entry name" value="IF2"/>
    <property type="match status" value="1"/>
</dbReference>
<reference key="1">
    <citation type="journal article" date="2009" name="Stand. Genomic Sci.">
        <title>Complete genome sequence of Beutenbergia cavernae type strain (HKI 0122).</title>
        <authorList>
            <person name="Land M."/>
            <person name="Pukall R."/>
            <person name="Abt B."/>
            <person name="Goker M."/>
            <person name="Rohde M."/>
            <person name="Glavina Del Rio T."/>
            <person name="Tice H."/>
            <person name="Copeland A."/>
            <person name="Cheng J.F."/>
            <person name="Lucas S."/>
            <person name="Chen F."/>
            <person name="Nolan M."/>
            <person name="Bruce D."/>
            <person name="Goodwin L."/>
            <person name="Pitluck S."/>
            <person name="Ivanova N."/>
            <person name="Mavromatis K."/>
            <person name="Ovchinnikova G."/>
            <person name="Pati A."/>
            <person name="Chen A."/>
            <person name="Palaniappan K."/>
            <person name="Hauser L."/>
            <person name="Chang Y.J."/>
            <person name="Jefferies C.C."/>
            <person name="Saunders E."/>
            <person name="Brettin T."/>
            <person name="Detter J.C."/>
            <person name="Han C."/>
            <person name="Chain P."/>
            <person name="Bristow J."/>
            <person name="Eisen J.A."/>
            <person name="Markowitz V."/>
            <person name="Hugenholtz P."/>
            <person name="Kyrpides N.C."/>
            <person name="Klenk H.P."/>
            <person name="Lapidus A."/>
        </authorList>
    </citation>
    <scope>NUCLEOTIDE SEQUENCE [LARGE SCALE GENOMIC DNA]</scope>
    <source>
        <strain>ATCC BAA-8 / DSM 12333 / CCUG 43141 / JCM 11478 / NBRC 16432 / NCIMB 13614 / HKI 0122</strain>
    </source>
</reference>
<feature type="chain" id="PRO_1000202764" description="Translation initiation factor IF-2">
    <location>
        <begin position="1"/>
        <end position="956"/>
    </location>
</feature>
<feature type="domain" description="tr-type G">
    <location>
        <begin position="448"/>
        <end position="619"/>
    </location>
</feature>
<feature type="region of interest" description="Disordered" evidence="3">
    <location>
        <begin position="50"/>
        <end position="351"/>
    </location>
</feature>
<feature type="region of interest" description="G1" evidence="1">
    <location>
        <begin position="457"/>
        <end position="464"/>
    </location>
</feature>
<feature type="region of interest" description="G2" evidence="1">
    <location>
        <begin position="482"/>
        <end position="486"/>
    </location>
</feature>
<feature type="region of interest" description="G3" evidence="1">
    <location>
        <begin position="507"/>
        <end position="510"/>
    </location>
</feature>
<feature type="region of interest" description="G4" evidence="1">
    <location>
        <begin position="561"/>
        <end position="564"/>
    </location>
</feature>
<feature type="region of interest" description="G5" evidence="1">
    <location>
        <begin position="597"/>
        <end position="599"/>
    </location>
</feature>
<feature type="compositionally biased region" description="Pro residues" evidence="3">
    <location>
        <begin position="64"/>
        <end position="95"/>
    </location>
</feature>
<feature type="compositionally biased region" description="Low complexity" evidence="3">
    <location>
        <begin position="96"/>
        <end position="107"/>
    </location>
</feature>
<feature type="compositionally biased region" description="Low complexity" evidence="3">
    <location>
        <begin position="121"/>
        <end position="136"/>
    </location>
</feature>
<feature type="compositionally biased region" description="Basic and acidic residues" evidence="3">
    <location>
        <begin position="146"/>
        <end position="155"/>
    </location>
</feature>
<feature type="compositionally biased region" description="Gly residues" evidence="3">
    <location>
        <begin position="171"/>
        <end position="192"/>
    </location>
</feature>
<feature type="compositionally biased region" description="Gly residues" evidence="3">
    <location>
        <begin position="206"/>
        <end position="234"/>
    </location>
</feature>
<feature type="compositionally biased region" description="Low complexity" evidence="3">
    <location>
        <begin position="235"/>
        <end position="254"/>
    </location>
</feature>
<feature type="compositionally biased region" description="Gly residues" evidence="3">
    <location>
        <begin position="255"/>
        <end position="320"/>
    </location>
</feature>
<feature type="compositionally biased region" description="Basic residues" evidence="3">
    <location>
        <begin position="324"/>
        <end position="333"/>
    </location>
</feature>
<feature type="binding site" evidence="2">
    <location>
        <begin position="457"/>
        <end position="464"/>
    </location>
    <ligand>
        <name>GTP</name>
        <dbReference type="ChEBI" id="CHEBI:37565"/>
    </ligand>
</feature>
<feature type="binding site" evidence="2">
    <location>
        <begin position="507"/>
        <end position="511"/>
    </location>
    <ligand>
        <name>GTP</name>
        <dbReference type="ChEBI" id="CHEBI:37565"/>
    </ligand>
</feature>
<feature type="binding site" evidence="2">
    <location>
        <begin position="561"/>
        <end position="564"/>
    </location>
    <ligand>
        <name>GTP</name>
        <dbReference type="ChEBI" id="CHEBI:37565"/>
    </ligand>
</feature>
<comment type="function">
    <text evidence="2">One of the essential components for the initiation of protein synthesis. Protects formylmethionyl-tRNA from spontaneous hydrolysis and promotes its binding to the 30S ribosomal subunits. Also involved in the hydrolysis of GTP during the formation of the 70S ribosomal complex.</text>
</comment>
<comment type="subcellular location">
    <subcellularLocation>
        <location evidence="2">Cytoplasm</location>
    </subcellularLocation>
</comment>
<comment type="similarity">
    <text evidence="2">Belongs to the TRAFAC class translation factor GTPase superfamily. Classic translation factor GTPase family. IF-2 subfamily.</text>
</comment>
<sequence>MAKVRVHELARELGVDSKTVLAKLNELGEFVKSASSTIEAPVVRRLRESFPADSGGAANGAPAAPKPARAPKPAPKAAPAPPVEEAPAEPAPPAAPEVVAAPEAPVAAPEPPAPSREAEVPEAPAAERPAAQARPATPGPRPAPRAAEKPADTRTPRPGNNPFASSQGMPRPGGQGGPRPGGPRPSGGGGPRPGNNPFAPSQGMPRPGGSGAAGPRPGGTGAAGPRPGGSGQGGSRPSPGMMPGRSAVGRPGAPARGGSGGPGGGRGGPGGGRGGGGGFGGAPGRGGPGGAPGGGGGFSGGGRSGRGGRGGTQGAFGRAGGKPVRARKSRRAKRQEFEQMSAPSIGGVQVPRGDGTTVVRIRRGASLSDFADRIDANPASLVTVLFHLGEMATVTQALDAGTFEALGAELGYVIEIVSPEDEERELLGSFDIDLDAEAAAESDEDLEARPPVVTVMGHVDHGKTRLLDAIRSTDVVAGEAGGITQHIGAYQVHVTHEDADRAVTFLDTPGHEAFTAMRARGADVTDIAILVVAADDGVMPQTIEALNHAQAANVPIVVAVNKVDKEGANPDKVMQQLTEYNLVAEAYGGDTMFVNVSAKNGTGIDELLEAVLLTADAALDLRANPNKDARGVAIEANLDKGRGAVATVLVQSGTLTVGDSIVAGTAYGRVRAMFDENGDNLSEATPSRPVQVLGLTSVPRAGDSFLVAPDDRTARQIADKRDAAERAATLAKRRKRISLEDFTQALEQGKVSTLNLVLKGDVSGAVEALEDALLQLDVGAEVDLRIIHRGVGGITQNDVNLATVDNAIIIGFNVRPDVRVAELADREGVDIRYYSVIYAAIEDVENSLKGMLKPEFEEVQLGTAEVLQVFRSSKFGNIAGSRVRSGLIRRGASARVLRDSVVIGDNLSIGSLRREKDDVTEVRDGFECGIGLGSFNDLREGDVIETFEVREKERAS</sequence>